<comment type="function">
    <text evidence="1">DNA-dependent RNA polymerase catalyzes the transcription of DNA into RNA using the four ribonucleoside triphosphates as substrates.</text>
</comment>
<comment type="catalytic activity">
    <reaction evidence="1">
        <text>RNA(n) + a ribonucleoside 5'-triphosphate = RNA(n+1) + diphosphate</text>
        <dbReference type="Rhea" id="RHEA:21248"/>
        <dbReference type="Rhea" id="RHEA-COMP:14527"/>
        <dbReference type="Rhea" id="RHEA-COMP:17342"/>
        <dbReference type="ChEBI" id="CHEBI:33019"/>
        <dbReference type="ChEBI" id="CHEBI:61557"/>
        <dbReference type="ChEBI" id="CHEBI:140395"/>
        <dbReference type="EC" id="2.7.7.6"/>
    </reaction>
</comment>
<comment type="cofactor">
    <cofactor evidence="1">
        <name>Mg(2+)</name>
        <dbReference type="ChEBI" id="CHEBI:18420"/>
    </cofactor>
    <text evidence="1">Binds 1 Mg(2+) ion per subunit.</text>
</comment>
<comment type="cofactor">
    <cofactor evidence="1">
        <name>Zn(2+)</name>
        <dbReference type="ChEBI" id="CHEBI:29105"/>
    </cofactor>
    <text evidence="1">Binds 2 Zn(2+) ions per subunit.</text>
</comment>
<comment type="subunit">
    <text evidence="1">The RNAP catalytic core consists of 2 alpha, 1 beta, 1 beta' and 1 omega subunit. When a sigma factor is associated with the core the holoenzyme is formed, which can initiate transcription.</text>
</comment>
<comment type="similarity">
    <text evidence="1">Belongs to the RNA polymerase beta' chain family.</text>
</comment>
<sequence>MNQEVMNLFNPTAPTQTFDQIKISIASPERILSWSYGEIKKPETINYRTFKPERDGLFCARIFGPIKDYECLCGKYKRMKYKGIICEKCGVEVTLSKVRRERMGHIELAAPVAHIWFLKSLPSRIGLLLDMTLKDLERVLYFENYIVLEPGLTSLKERQLLTEEEYIDAQDQYGEDSFTAGIGAEAIRELMMALDLEKIAADLRVEIAESTSELKPKKLAKRLKLIEAFIESGNKPEWMIMTQIPVIPPELRPLVPLDGGRFATSDLNDLYRRVINRNNRLKRLMELRAPDIIIRNEKRMLQESVDALFDNGRRGRVITGANKRPLKSLADMLKGKQGRFRQNLLGKRVDYSGRSVIVVGPELKLHQCGLPKKMALELFKPFIYSRLEAKGLSATVKQAKKLVEKERPEVWEILEQVIREHPVLLNRAPTLHRLGIQAFEPVLIEGKAIQLHPLVCAAFNADFDGDQMAVHVPLSLEAQLEARVLMMSTNNILHPANGSPIIVPSQDIVLGLYYVTIQKDNEPGEGMVFGSVSEIEHALAVKAVTLHAKVKARYTTKDADGNSYTEVVDTTPGRMMVGELLPRHPNVPFDLVNRLLTKRDISKMIDVVYRHCGQKETVIFCDQIMALGFRQAFRAGISFGKDDMVIPEEKAKLVEETQTLATEYEQQYIDGLITQGEKYNKVVDAWAKCTDRVADVMMQKISAVQIDPETKREKQINSIYMMAHSGARGSPAQMKQLAGMRGLMAKPSGEIIETPIISNFKEGLTVLEYFNSTHGARKGLADTALKTANSGYLTRRLVDVAQDSIITEEDCGTIGGITVQPVIEAGDVIVSLGTRVLGRTTAEDVMNPATGEVLIPKNHLIDEADVDTIEEANVQGIKIRSVLTCEAANGVCGACYGRDLARGTPVNMGEAVGVIAAQSIGEPGTQLTMRTFHIGGTAQVVDSSFIESNHAGTIKIVNRNVVKDSNGVLVVMGRNVQVQIIDEHGGERASHKLTYGSRLKFDDGDKIERGQRISEWDPYTMPMLTEVNGIAEFEDLVDGVSIREVADEATGISSRVVVDWRASPRGSDLRPAVVVKDKNGKILKLANGNDARYLLSVDAILSVDNGAAVHAGDVLARIPTEGAKTRDITGGLPRVAELFEARRPKDHAIIAEATGRVEFGKDYKNKRRIIVHPVDESLEPIEYLIPKGKHISVQEGDVIEKGEFILDGHPAPHDILAISGVEELAAYLVNEVQDVYRLQGVAINDKHIEVIVRNMLQKVEVTSPGESITLPGEQLDRAEFDEMNAKLEAQGKTPATAVPVLLGITKASLQTRSFISAASFQETTRVLTEAAVSGKVDQLVGLKENVIVGRLIPAGTGGMLQRLRGEAQNRDDKILEDQGGATPTASTEIKEPAEGAA</sequence>
<reference key="1">
    <citation type="journal article" date="2011" name="Stand. Genomic Sci.">
        <title>Complete genome sequence of Parvibaculum lavamentivorans type strain (DS-1(T)).</title>
        <authorList>
            <person name="Schleheck D."/>
            <person name="Weiss M."/>
            <person name="Pitluck S."/>
            <person name="Bruce D."/>
            <person name="Land M.L."/>
            <person name="Han S."/>
            <person name="Saunders E."/>
            <person name="Tapia R."/>
            <person name="Detter C."/>
            <person name="Brettin T."/>
            <person name="Han J."/>
            <person name="Woyke T."/>
            <person name="Goodwin L."/>
            <person name="Pennacchio L."/>
            <person name="Nolan M."/>
            <person name="Cook A.M."/>
            <person name="Kjelleberg S."/>
            <person name="Thomas T."/>
        </authorList>
    </citation>
    <scope>NUCLEOTIDE SEQUENCE [LARGE SCALE GENOMIC DNA]</scope>
    <source>
        <strain>DS-1 / DSM 13023 / NCIMB 13966</strain>
    </source>
</reference>
<organism>
    <name type="scientific">Parvibaculum lavamentivorans (strain DS-1 / DSM 13023 / NCIMB 13966)</name>
    <dbReference type="NCBI Taxonomy" id="402881"/>
    <lineage>
        <taxon>Bacteria</taxon>
        <taxon>Pseudomonadati</taxon>
        <taxon>Pseudomonadota</taxon>
        <taxon>Alphaproteobacteria</taxon>
        <taxon>Hyphomicrobiales</taxon>
        <taxon>Parvibaculaceae</taxon>
        <taxon>Parvibaculum</taxon>
    </lineage>
</organism>
<name>RPOC_PARL1</name>
<protein>
    <recommendedName>
        <fullName evidence="1">DNA-directed RNA polymerase subunit beta'</fullName>
        <shortName evidence="1">RNAP subunit beta'</shortName>
        <ecNumber evidence="1">2.7.7.6</ecNumber>
    </recommendedName>
    <alternativeName>
        <fullName evidence="1">RNA polymerase subunit beta'</fullName>
    </alternativeName>
    <alternativeName>
        <fullName evidence="1">Transcriptase subunit beta'</fullName>
    </alternativeName>
</protein>
<dbReference type="EC" id="2.7.7.6" evidence="1"/>
<dbReference type="EMBL" id="CP000774">
    <property type="protein sequence ID" value="ABS64338.1"/>
    <property type="molecule type" value="Genomic_DNA"/>
</dbReference>
<dbReference type="RefSeq" id="WP_012111653.1">
    <property type="nucleotide sequence ID" value="NC_009719.1"/>
</dbReference>
<dbReference type="SMR" id="A7HWQ5"/>
<dbReference type="STRING" id="402881.Plav_2730"/>
<dbReference type="KEGG" id="pla:Plav_2730"/>
<dbReference type="eggNOG" id="COG0086">
    <property type="taxonomic scope" value="Bacteria"/>
</dbReference>
<dbReference type="HOGENOM" id="CLU_000524_3_1_5"/>
<dbReference type="OrthoDB" id="9815296at2"/>
<dbReference type="Proteomes" id="UP000006377">
    <property type="component" value="Chromosome"/>
</dbReference>
<dbReference type="GO" id="GO:0000428">
    <property type="term" value="C:DNA-directed RNA polymerase complex"/>
    <property type="evidence" value="ECO:0007669"/>
    <property type="project" value="UniProtKB-KW"/>
</dbReference>
<dbReference type="GO" id="GO:0003677">
    <property type="term" value="F:DNA binding"/>
    <property type="evidence" value="ECO:0007669"/>
    <property type="project" value="UniProtKB-UniRule"/>
</dbReference>
<dbReference type="GO" id="GO:0003899">
    <property type="term" value="F:DNA-directed RNA polymerase activity"/>
    <property type="evidence" value="ECO:0007669"/>
    <property type="project" value="UniProtKB-UniRule"/>
</dbReference>
<dbReference type="GO" id="GO:0000287">
    <property type="term" value="F:magnesium ion binding"/>
    <property type="evidence" value="ECO:0007669"/>
    <property type="project" value="UniProtKB-UniRule"/>
</dbReference>
<dbReference type="GO" id="GO:0008270">
    <property type="term" value="F:zinc ion binding"/>
    <property type="evidence" value="ECO:0007669"/>
    <property type="project" value="UniProtKB-UniRule"/>
</dbReference>
<dbReference type="GO" id="GO:0006351">
    <property type="term" value="P:DNA-templated transcription"/>
    <property type="evidence" value="ECO:0007669"/>
    <property type="project" value="UniProtKB-UniRule"/>
</dbReference>
<dbReference type="CDD" id="cd02655">
    <property type="entry name" value="RNAP_beta'_C"/>
    <property type="match status" value="1"/>
</dbReference>
<dbReference type="CDD" id="cd01609">
    <property type="entry name" value="RNAP_beta'_N"/>
    <property type="match status" value="1"/>
</dbReference>
<dbReference type="FunFam" id="1.10.132.30:FF:000003">
    <property type="entry name" value="DNA-directed RNA polymerase subunit beta"/>
    <property type="match status" value="1"/>
</dbReference>
<dbReference type="FunFam" id="4.10.860.120:FF:000001">
    <property type="entry name" value="DNA-directed RNA polymerase subunit beta"/>
    <property type="match status" value="1"/>
</dbReference>
<dbReference type="Gene3D" id="1.10.132.30">
    <property type="match status" value="1"/>
</dbReference>
<dbReference type="Gene3D" id="1.10.150.390">
    <property type="match status" value="1"/>
</dbReference>
<dbReference type="Gene3D" id="1.10.1790.20">
    <property type="match status" value="1"/>
</dbReference>
<dbReference type="Gene3D" id="1.10.40.90">
    <property type="match status" value="1"/>
</dbReference>
<dbReference type="Gene3D" id="2.40.40.20">
    <property type="match status" value="1"/>
</dbReference>
<dbReference type="Gene3D" id="2.40.50.100">
    <property type="match status" value="3"/>
</dbReference>
<dbReference type="Gene3D" id="4.10.860.120">
    <property type="entry name" value="RNA polymerase II, clamp domain"/>
    <property type="match status" value="1"/>
</dbReference>
<dbReference type="Gene3D" id="1.10.274.100">
    <property type="entry name" value="RNA polymerase Rpb1, domain 3"/>
    <property type="match status" value="1"/>
</dbReference>
<dbReference type="HAMAP" id="MF_01322">
    <property type="entry name" value="RNApol_bact_RpoC"/>
    <property type="match status" value="1"/>
</dbReference>
<dbReference type="InterPro" id="IPR045867">
    <property type="entry name" value="DNA-dir_RpoC_beta_prime"/>
</dbReference>
<dbReference type="InterPro" id="IPR012754">
    <property type="entry name" value="DNA-dir_RpoC_beta_prime_bact"/>
</dbReference>
<dbReference type="InterPro" id="IPR000722">
    <property type="entry name" value="RNA_pol_asu"/>
</dbReference>
<dbReference type="InterPro" id="IPR006592">
    <property type="entry name" value="RNA_pol_N"/>
</dbReference>
<dbReference type="InterPro" id="IPR007080">
    <property type="entry name" value="RNA_pol_Rpb1_1"/>
</dbReference>
<dbReference type="InterPro" id="IPR007066">
    <property type="entry name" value="RNA_pol_Rpb1_3"/>
</dbReference>
<dbReference type="InterPro" id="IPR042102">
    <property type="entry name" value="RNA_pol_Rpb1_3_sf"/>
</dbReference>
<dbReference type="InterPro" id="IPR007083">
    <property type="entry name" value="RNA_pol_Rpb1_4"/>
</dbReference>
<dbReference type="InterPro" id="IPR007081">
    <property type="entry name" value="RNA_pol_Rpb1_5"/>
</dbReference>
<dbReference type="InterPro" id="IPR044893">
    <property type="entry name" value="RNA_pol_Rpb1_clamp_domain"/>
</dbReference>
<dbReference type="InterPro" id="IPR038120">
    <property type="entry name" value="Rpb1_funnel_sf"/>
</dbReference>
<dbReference type="NCBIfam" id="TIGR02386">
    <property type="entry name" value="rpoC_TIGR"/>
    <property type="match status" value="1"/>
</dbReference>
<dbReference type="PANTHER" id="PTHR19376">
    <property type="entry name" value="DNA-DIRECTED RNA POLYMERASE"/>
    <property type="match status" value="1"/>
</dbReference>
<dbReference type="PANTHER" id="PTHR19376:SF54">
    <property type="entry name" value="DNA-DIRECTED RNA POLYMERASE SUBUNIT BETA"/>
    <property type="match status" value="1"/>
</dbReference>
<dbReference type="Pfam" id="PF04997">
    <property type="entry name" value="RNA_pol_Rpb1_1"/>
    <property type="match status" value="1"/>
</dbReference>
<dbReference type="Pfam" id="PF00623">
    <property type="entry name" value="RNA_pol_Rpb1_2"/>
    <property type="match status" value="1"/>
</dbReference>
<dbReference type="Pfam" id="PF04983">
    <property type="entry name" value="RNA_pol_Rpb1_3"/>
    <property type="match status" value="1"/>
</dbReference>
<dbReference type="Pfam" id="PF05000">
    <property type="entry name" value="RNA_pol_Rpb1_4"/>
    <property type="match status" value="1"/>
</dbReference>
<dbReference type="Pfam" id="PF04998">
    <property type="entry name" value="RNA_pol_Rpb1_5"/>
    <property type="match status" value="1"/>
</dbReference>
<dbReference type="SMART" id="SM00663">
    <property type="entry name" value="RPOLA_N"/>
    <property type="match status" value="1"/>
</dbReference>
<dbReference type="SUPFAM" id="SSF64484">
    <property type="entry name" value="beta and beta-prime subunits of DNA dependent RNA-polymerase"/>
    <property type="match status" value="1"/>
</dbReference>
<keyword id="KW-0240">DNA-directed RNA polymerase</keyword>
<keyword id="KW-0460">Magnesium</keyword>
<keyword id="KW-0479">Metal-binding</keyword>
<keyword id="KW-0548">Nucleotidyltransferase</keyword>
<keyword id="KW-1185">Reference proteome</keyword>
<keyword id="KW-0804">Transcription</keyword>
<keyword id="KW-0808">Transferase</keyword>
<keyword id="KW-0862">Zinc</keyword>
<accession>A7HWQ5</accession>
<gene>
    <name evidence="1" type="primary">rpoC</name>
    <name type="ordered locus">Plav_2730</name>
</gene>
<evidence type="ECO:0000255" key="1">
    <source>
        <dbReference type="HAMAP-Rule" id="MF_01322"/>
    </source>
</evidence>
<evidence type="ECO:0000256" key="2">
    <source>
        <dbReference type="SAM" id="MobiDB-lite"/>
    </source>
</evidence>
<feature type="chain" id="PRO_0000353401" description="DNA-directed RNA polymerase subunit beta'">
    <location>
        <begin position="1"/>
        <end position="1397"/>
    </location>
</feature>
<feature type="region of interest" description="Disordered" evidence="2">
    <location>
        <begin position="1368"/>
        <end position="1397"/>
    </location>
</feature>
<feature type="compositionally biased region" description="Basic and acidic residues" evidence="2">
    <location>
        <begin position="1388"/>
        <end position="1397"/>
    </location>
</feature>
<feature type="binding site" evidence="1">
    <location>
        <position position="71"/>
    </location>
    <ligand>
        <name>Zn(2+)</name>
        <dbReference type="ChEBI" id="CHEBI:29105"/>
        <label>1</label>
    </ligand>
</feature>
<feature type="binding site" evidence="1">
    <location>
        <position position="73"/>
    </location>
    <ligand>
        <name>Zn(2+)</name>
        <dbReference type="ChEBI" id="CHEBI:29105"/>
        <label>1</label>
    </ligand>
</feature>
<feature type="binding site" evidence="1">
    <location>
        <position position="86"/>
    </location>
    <ligand>
        <name>Zn(2+)</name>
        <dbReference type="ChEBI" id="CHEBI:29105"/>
        <label>1</label>
    </ligand>
</feature>
<feature type="binding site" evidence="1">
    <location>
        <position position="89"/>
    </location>
    <ligand>
        <name>Zn(2+)</name>
        <dbReference type="ChEBI" id="CHEBI:29105"/>
        <label>1</label>
    </ligand>
</feature>
<feature type="binding site" evidence="1">
    <location>
        <position position="462"/>
    </location>
    <ligand>
        <name>Mg(2+)</name>
        <dbReference type="ChEBI" id="CHEBI:18420"/>
    </ligand>
</feature>
<feature type="binding site" evidence="1">
    <location>
        <position position="464"/>
    </location>
    <ligand>
        <name>Mg(2+)</name>
        <dbReference type="ChEBI" id="CHEBI:18420"/>
    </ligand>
</feature>
<feature type="binding site" evidence="1">
    <location>
        <position position="466"/>
    </location>
    <ligand>
        <name>Mg(2+)</name>
        <dbReference type="ChEBI" id="CHEBI:18420"/>
    </ligand>
</feature>
<feature type="binding site" evidence="1">
    <location>
        <position position="811"/>
    </location>
    <ligand>
        <name>Zn(2+)</name>
        <dbReference type="ChEBI" id="CHEBI:29105"/>
        <label>2</label>
    </ligand>
</feature>
<feature type="binding site" evidence="1">
    <location>
        <position position="885"/>
    </location>
    <ligand>
        <name>Zn(2+)</name>
        <dbReference type="ChEBI" id="CHEBI:29105"/>
        <label>2</label>
    </ligand>
</feature>
<feature type="binding site" evidence="1">
    <location>
        <position position="892"/>
    </location>
    <ligand>
        <name>Zn(2+)</name>
        <dbReference type="ChEBI" id="CHEBI:29105"/>
        <label>2</label>
    </ligand>
</feature>
<feature type="binding site" evidence="1">
    <location>
        <position position="895"/>
    </location>
    <ligand>
        <name>Zn(2+)</name>
        <dbReference type="ChEBI" id="CHEBI:29105"/>
        <label>2</label>
    </ligand>
</feature>
<proteinExistence type="inferred from homology"/>